<reference key="1">
    <citation type="journal article" date="2002" name="J. Biol. Chem.">
        <title>Alpha-conotoxin GIC from Conus geographus, a novel peptide antagonist of nicotinic acetylcholine receptors.</title>
        <authorList>
            <person name="McIntosh J.M."/>
            <person name="Dowell C."/>
            <person name="Watkins M."/>
            <person name="Garrett J.E."/>
            <person name="Yoshikami D."/>
            <person name="Olivera B.M."/>
        </authorList>
    </citation>
    <scope>REVIEW</scope>
    <scope>AMIDATION AT CYS-15</scope>
</reference>
<protein>
    <recommendedName>
        <fullName>Alpha-conotoxin-like MIB</fullName>
    </recommendedName>
</protein>
<feature type="peptide" id="PRO_0000249789" description="Alpha-conotoxin-like MIB">
    <location>
        <begin position="1"/>
        <end position="15"/>
    </location>
</feature>
<feature type="modified residue" description="Cysteine amide" evidence="3">
    <location>
        <position position="15"/>
    </location>
</feature>
<feature type="disulfide bond" evidence="2">
    <location>
        <begin position="4"/>
        <end position="9"/>
    </location>
</feature>
<feature type="disulfide bond" evidence="2">
    <location>
        <begin position="5"/>
        <end position="15"/>
    </location>
</feature>
<organism>
    <name type="scientific">Conus magus</name>
    <name type="common">Magical cone</name>
    <dbReference type="NCBI Taxonomy" id="6492"/>
    <lineage>
        <taxon>Eukaryota</taxon>
        <taxon>Metazoa</taxon>
        <taxon>Spiralia</taxon>
        <taxon>Lophotrochozoa</taxon>
        <taxon>Mollusca</taxon>
        <taxon>Gastropoda</taxon>
        <taxon>Caenogastropoda</taxon>
        <taxon>Neogastropoda</taxon>
        <taxon>Conoidea</taxon>
        <taxon>Conidae</taxon>
        <taxon>Conus</taxon>
        <taxon>Pionoconus</taxon>
    </lineage>
</organism>
<dbReference type="ConoServer" id="16">
    <property type="toxin name" value="M1B"/>
</dbReference>
<dbReference type="GO" id="GO:0005576">
    <property type="term" value="C:extracellular region"/>
    <property type="evidence" value="ECO:0007669"/>
    <property type="project" value="UniProtKB-SubCell"/>
</dbReference>
<dbReference type="GO" id="GO:0035792">
    <property type="term" value="C:host cell postsynaptic membrane"/>
    <property type="evidence" value="ECO:0007669"/>
    <property type="project" value="UniProtKB-KW"/>
</dbReference>
<dbReference type="GO" id="GO:0030550">
    <property type="term" value="F:acetylcholine receptor inhibitor activity"/>
    <property type="evidence" value="ECO:0007669"/>
    <property type="project" value="UniProtKB-KW"/>
</dbReference>
<dbReference type="GO" id="GO:0099106">
    <property type="term" value="F:ion channel regulator activity"/>
    <property type="evidence" value="ECO:0007669"/>
    <property type="project" value="UniProtKB-KW"/>
</dbReference>
<dbReference type="GO" id="GO:0090729">
    <property type="term" value="F:toxin activity"/>
    <property type="evidence" value="ECO:0007669"/>
    <property type="project" value="UniProtKB-KW"/>
</dbReference>
<proteinExistence type="evidence at protein level"/>
<accession>P0C1W2</accession>
<comment type="function">
    <text evidence="1">Alpha-conotoxins act on postsynaptic membranes, they bind to the nicotinic acetylcholine receptors (nAChR) and thus inhibit them.</text>
</comment>
<comment type="subcellular location">
    <subcellularLocation>
        <location>Secreted</location>
    </subcellularLocation>
</comment>
<comment type="tissue specificity">
    <text>Expressed by the venom duct.</text>
</comment>
<comment type="domain">
    <text>The cysteine framework is I (CC-C-C). Alpha3/5 pattern.</text>
</comment>
<comment type="similarity">
    <text evidence="4">Belongs to the conotoxin A superfamily.</text>
</comment>
<name>CA1B_CONMA</name>
<keyword id="KW-0008">Acetylcholine receptor inhibiting toxin</keyword>
<keyword id="KW-0027">Amidation</keyword>
<keyword id="KW-1015">Disulfide bond</keyword>
<keyword id="KW-0872">Ion channel impairing toxin</keyword>
<keyword id="KW-0528">Neurotoxin</keyword>
<keyword id="KW-0629">Postsynaptic neurotoxin</keyword>
<keyword id="KW-0964">Secreted</keyword>
<keyword id="KW-0800">Toxin</keyword>
<sequence length="15" mass="1696">NGRCCHPACARKYNC</sequence>
<evidence type="ECO:0000250" key="1"/>
<evidence type="ECO:0000250" key="2">
    <source>
        <dbReference type="UniProtKB" id="P01519"/>
    </source>
</evidence>
<evidence type="ECO:0000269" key="3">
    <source>
    </source>
</evidence>
<evidence type="ECO:0000305" key="4"/>